<proteinExistence type="evidence at transcript level"/>
<gene>
    <name type="primary">med26</name>
    <name type="synonym">crsp7</name>
</gene>
<sequence length="597" mass="65772">MTAAPVSPREIRERLLQAIDKQSNIQNMVAVLEVISSLEKYPITKEALEETRLGKLINDVRKKTSNEDLAKRAKKLLRNWQKLIEPVTQNEQLVRGIPNLPGSANGGGSHNCKADPAPTNLLAGKPIQELKGRNDIQKAHSPKADKTPKRKRKEHRDGGQGTPGHLSKPNHELFQNSSPPPTNGIGGSPPDNLPSPLDGGLQSNNRLEPAENDKHGKIPINAVRPHTNSPGLVKHPSTSSLLKVVVLQQHSGGLDDALSHQPRSPRCSSFSPRGTRAELATRQHTTYAPKGSAPSPSQRLPGVDSAHQSPLHPSTPPATAKRLESPRQDRVSSPHKPVEQLPSTDCHQVLPRTSQQHIPRSSLVDSQTPRTGFSPESSKLDSDDAASGSDNLKRKKSRLRIECEGQSADGTGKPARVKKERRLTFDVITGQIKPLTLKDPAQVESSAPTEQHRTETDKQDLTLSLPSPFQLTNWKELSGNEIIQSYLHRQSSLLSSSGIQTQSAHYYMSEYLKQEECTKRESRKTHVLVPIVLPSDLPGRTREITSSDTDRIQNQHWPGVNGCHDTQGNWYDWTQCISLDPHGDDGRLNILPYVCLD</sequence>
<protein>
    <recommendedName>
        <fullName>Mediator of RNA polymerase II transcription subunit 26</fullName>
    </recommendedName>
    <alternativeName>
        <fullName>Cofactor required for Sp1 transcriptional activation subunit 7</fullName>
        <shortName>CRSP complex subunit 7</shortName>
    </alternativeName>
    <alternativeName>
        <fullName>Mediator complex subunit 26</fullName>
    </alternativeName>
</protein>
<name>MED26_XENLA</name>
<keyword id="KW-0010">Activator</keyword>
<keyword id="KW-0539">Nucleus</keyword>
<keyword id="KW-1185">Reference proteome</keyword>
<keyword id="KW-0804">Transcription</keyword>
<keyword id="KW-0805">Transcription regulation</keyword>
<organism>
    <name type="scientific">Xenopus laevis</name>
    <name type="common">African clawed frog</name>
    <dbReference type="NCBI Taxonomy" id="8355"/>
    <lineage>
        <taxon>Eukaryota</taxon>
        <taxon>Metazoa</taxon>
        <taxon>Chordata</taxon>
        <taxon>Craniata</taxon>
        <taxon>Vertebrata</taxon>
        <taxon>Euteleostomi</taxon>
        <taxon>Amphibia</taxon>
        <taxon>Batrachia</taxon>
        <taxon>Anura</taxon>
        <taxon>Pipoidea</taxon>
        <taxon>Pipidae</taxon>
        <taxon>Xenopodinae</taxon>
        <taxon>Xenopus</taxon>
        <taxon>Xenopus</taxon>
    </lineage>
</organism>
<reference key="1">
    <citation type="submission" date="2001-06" db="EMBL/GenBank/DDBJ databases">
        <authorList>
            <person name="Hartmann E."/>
        </authorList>
    </citation>
    <scope>NUCLEOTIDE SEQUENCE [MRNA]</scope>
</reference>
<reference key="2">
    <citation type="submission" date="2004-07" db="EMBL/GenBank/DDBJ databases">
        <authorList>
            <consortium name="NIH - Xenopus Gene Collection (XGC) project"/>
        </authorList>
    </citation>
    <scope>NUCLEOTIDE SEQUENCE [LARGE SCALE MRNA]</scope>
    <source>
        <tissue>Kidney</tissue>
    </source>
</reference>
<feature type="chain" id="PRO_0000304961" description="Mediator of RNA polymerase II transcription subunit 26">
    <location>
        <begin position="1"/>
        <end position="597"/>
    </location>
</feature>
<feature type="domain" description="TFIIS N-terminal" evidence="2">
    <location>
        <begin position="10"/>
        <end position="87"/>
    </location>
</feature>
<feature type="region of interest" description="Disordered" evidence="3">
    <location>
        <begin position="96"/>
        <end position="236"/>
    </location>
</feature>
<feature type="region of interest" description="Disordered" evidence="3">
    <location>
        <begin position="254"/>
        <end position="418"/>
    </location>
</feature>
<feature type="region of interest" description="Disordered" evidence="3">
    <location>
        <begin position="436"/>
        <end position="459"/>
    </location>
</feature>
<feature type="compositionally biased region" description="Basic and acidic residues" evidence="3">
    <location>
        <begin position="128"/>
        <end position="147"/>
    </location>
</feature>
<feature type="compositionally biased region" description="Polar residues" evidence="3">
    <location>
        <begin position="226"/>
        <end position="236"/>
    </location>
</feature>
<feature type="compositionally biased region" description="Low complexity" evidence="3">
    <location>
        <begin position="262"/>
        <end position="273"/>
    </location>
</feature>
<feature type="compositionally biased region" description="Basic and acidic residues" evidence="3">
    <location>
        <begin position="321"/>
        <end position="338"/>
    </location>
</feature>
<feature type="compositionally biased region" description="Polar residues" evidence="3">
    <location>
        <begin position="341"/>
        <end position="377"/>
    </location>
</feature>
<feature type="compositionally biased region" description="Basic and acidic residues" evidence="3">
    <location>
        <begin position="450"/>
        <end position="459"/>
    </location>
</feature>
<accession>Q90YY5</accession>
<comment type="function">
    <text evidence="1">Component of the Mediator complex, a coactivator involved in the regulated transcription of nearly all RNA polymerase II-dependent genes. Mediator functions as a bridge to convey information from gene-specific regulatory proteins to the basal RNA polymerase II transcription machinery. Mediator is recruited to promoters by direct interactions with regulatory proteins and serves as a scaffold for the assembly of a functional preinitiation complex with RNA polymerase II and the general transcription factors (By similarity).</text>
</comment>
<comment type="subunit">
    <text evidence="1">Component of the Mediator complex.</text>
</comment>
<comment type="subcellular location">
    <subcellularLocation>
        <location evidence="4">Nucleus</location>
    </subcellularLocation>
</comment>
<comment type="similarity">
    <text evidence="4">Belongs to the Mediator complex subunit 26 family.</text>
</comment>
<dbReference type="EMBL" id="AF395742">
    <property type="protein sequence ID" value="AAK83376.1"/>
    <property type="molecule type" value="mRNA"/>
</dbReference>
<dbReference type="EMBL" id="BC077251">
    <property type="protein sequence ID" value="AAH77251.1"/>
    <property type="molecule type" value="mRNA"/>
</dbReference>
<dbReference type="RefSeq" id="NP_001083898.1">
    <property type="nucleotide sequence ID" value="NM_001090429.1"/>
</dbReference>
<dbReference type="SMR" id="Q90YY5"/>
<dbReference type="GeneID" id="399180"/>
<dbReference type="KEGG" id="xla:399180"/>
<dbReference type="AGR" id="Xenbase:XB-GENE-1001807"/>
<dbReference type="CTD" id="399180"/>
<dbReference type="Xenbase" id="XB-GENE-1001807">
    <property type="gene designation" value="med26.L"/>
</dbReference>
<dbReference type="OMA" id="PDASRMD"/>
<dbReference type="OrthoDB" id="550309at2759"/>
<dbReference type="Proteomes" id="UP000186698">
    <property type="component" value="Chromosome 1L"/>
</dbReference>
<dbReference type="Bgee" id="399180">
    <property type="expression patterns" value="Expressed in ovary and 19 other cell types or tissues"/>
</dbReference>
<dbReference type="GO" id="GO:0070847">
    <property type="term" value="C:core mediator complex"/>
    <property type="evidence" value="ECO:0000318"/>
    <property type="project" value="GO_Central"/>
</dbReference>
<dbReference type="GO" id="GO:0016592">
    <property type="term" value="C:mediator complex"/>
    <property type="evidence" value="ECO:0000250"/>
    <property type="project" value="UniProtKB"/>
</dbReference>
<dbReference type="GO" id="GO:0003712">
    <property type="term" value="F:transcription coregulator activity"/>
    <property type="evidence" value="ECO:0000250"/>
    <property type="project" value="UniProtKB"/>
</dbReference>
<dbReference type="GO" id="GO:0010628">
    <property type="term" value="P:positive regulation of gene expression"/>
    <property type="evidence" value="ECO:0000318"/>
    <property type="project" value="GO_Central"/>
</dbReference>
<dbReference type="GO" id="GO:0006357">
    <property type="term" value="P:regulation of transcription by RNA polymerase II"/>
    <property type="evidence" value="ECO:0000250"/>
    <property type="project" value="UniProtKB"/>
</dbReference>
<dbReference type="CDD" id="cd00183">
    <property type="entry name" value="TFIIS_I"/>
    <property type="match status" value="1"/>
</dbReference>
<dbReference type="FunFam" id="1.20.930.10:FF:000008">
    <property type="entry name" value="mediator of RNA polymerase II transcription subunit 26"/>
    <property type="match status" value="1"/>
</dbReference>
<dbReference type="Gene3D" id="1.20.930.10">
    <property type="entry name" value="Conserved domain common to transcription factors TFIIS, elongin A, CRSP70"/>
    <property type="match status" value="1"/>
</dbReference>
<dbReference type="InterPro" id="IPR042376">
    <property type="entry name" value="MED26"/>
</dbReference>
<dbReference type="InterPro" id="IPR031416">
    <property type="entry name" value="Med26_C"/>
</dbReference>
<dbReference type="InterPro" id="IPR031417">
    <property type="entry name" value="Med26_Mid"/>
</dbReference>
<dbReference type="InterPro" id="IPR003617">
    <property type="entry name" value="TFIIS/CRSP70_N_sub"/>
</dbReference>
<dbReference type="InterPro" id="IPR035441">
    <property type="entry name" value="TFIIS/LEDGF_dom_sf"/>
</dbReference>
<dbReference type="InterPro" id="IPR017923">
    <property type="entry name" value="TFIIS_N"/>
</dbReference>
<dbReference type="PANTHER" id="PTHR15201">
    <property type="entry name" value="CRSP70"/>
    <property type="match status" value="1"/>
</dbReference>
<dbReference type="PANTHER" id="PTHR15201:SF1">
    <property type="entry name" value="MEDIATOR OF RNA POLYMERASE II TRANSCRIPTION SUBUNIT 26"/>
    <property type="match status" value="1"/>
</dbReference>
<dbReference type="Pfam" id="PF08711">
    <property type="entry name" value="Med26"/>
    <property type="match status" value="1"/>
</dbReference>
<dbReference type="Pfam" id="PF15693">
    <property type="entry name" value="Med26_C"/>
    <property type="match status" value="1"/>
</dbReference>
<dbReference type="Pfam" id="PF15694">
    <property type="entry name" value="Med26_M"/>
    <property type="match status" value="1"/>
</dbReference>
<dbReference type="SMART" id="SM00509">
    <property type="entry name" value="TFS2N"/>
    <property type="match status" value="1"/>
</dbReference>
<dbReference type="SUPFAM" id="SSF47676">
    <property type="entry name" value="Conserved domain common to transcription factors TFIIS, elongin A, CRSP70"/>
    <property type="match status" value="1"/>
</dbReference>
<dbReference type="PROSITE" id="PS51319">
    <property type="entry name" value="TFIIS_N"/>
    <property type="match status" value="1"/>
</dbReference>
<evidence type="ECO:0000250" key="1"/>
<evidence type="ECO:0000255" key="2">
    <source>
        <dbReference type="PROSITE-ProRule" id="PRU00649"/>
    </source>
</evidence>
<evidence type="ECO:0000256" key="3">
    <source>
        <dbReference type="SAM" id="MobiDB-lite"/>
    </source>
</evidence>
<evidence type="ECO:0000305" key="4"/>